<keyword id="KW-0227">DNA damage</keyword>
<keyword id="KW-0234">DNA repair</keyword>
<keyword id="KW-0235">DNA replication</keyword>
<keyword id="KW-0255">Endonuclease</keyword>
<keyword id="KW-0269">Exonuclease</keyword>
<keyword id="KW-0378">Hydrolase</keyword>
<keyword id="KW-0460">Magnesium</keyword>
<keyword id="KW-0479">Metal-binding</keyword>
<keyword id="KW-0496">Mitochondrion</keyword>
<keyword id="KW-0540">Nuclease</keyword>
<keyword id="KW-0539">Nucleus</keyword>
<keyword id="KW-0597">Phosphoprotein</keyword>
<keyword id="KW-1185">Reference proteome</keyword>
<evidence type="ECO:0000255" key="1">
    <source>
        <dbReference type="HAMAP-Rule" id="MF_03140"/>
    </source>
</evidence>
<evidence type="ECO:0000256" key="2">
    <source>
        <dbReference type="SAM" id="MobiDB-lite"/>
    </source>
</evidence>
<evidence type="ECO:0000305" key="3"/>
<reference key="1">
    <citation type="journal article" date="2010" name="Proc. Natl. Acad. Sci. U.S.A.">
        <title>Insights into evolution of multicellular fungi from the assembled chromosomes of the mushroom Coprinopsis cinerea (Coprinus cinereus).</title>
        <authorList>
            <person name="Stajich J.E."/>
            <person name="Wilke S.K."/>
            <person name="Ahren D."/>
            <person name="Au C.H."/>
            <person name="Birren B.W."/>
            <person name="Borodovsky M."/>
            <person name="Burns C."/>
            <person name="Canbaeck B."/>
            <person name="Casselton L.A."/>
            <person name="Cheng C.K."/>
            <person name="Deng J."/>
            <person name="Dietrich F.S."/>
            <person name="Fargo D.C."/>
            <person name="Farman M.L."/>
            <person name="Gathman A.C."/>
            <person name="Goldberg J."/>
            <person name="Guigo R."/>
            <person name="Hoegger P.J."/>
            <person name="Hooker J.B."/>
            <person name="Huggins A."/>
            <person name="James T.Y."/>
            <person name="Kamada T."/>
            <person name="Kilaru S."/>
            <person name="Kodira C."/>
            <person name="Kuees U."/>
            <person name="Kupfer D."/>
            <person name="Kwan H.S."/>
            <person name="Lomsadze A."/>
            <person name="Li W."/>
            <person name="Lilly W.W."/>
            <person name="Ma L.-J."/>
            <person name="Mackey A.J."/>
            <person name="Manning G."/>
            <person name="Martin F."/>
            <person name="Muraguchi H."/>
            <person name="Natvig D.O."/>
            <person name="Palmerini H."/>
            <person name="Ramesh M.A."/>
            <person name="Rehmeyer C.J."/>
            <person name="Roe B.A."/>
            <person name="Shenoy N."/>
            <person name="Stanke M."/>
            <person name="Ter-Hovhannisyan V."/>
            <person name="Tunlid A."/>
            <person name="Velagapudi R."/>
            <person name="Vision T.J."/>
            <person name="Zeng Q."/>
            <person name="Zolan M.E."/>
            <person name="Pukkila P.J."/>
        </authorList>
    </citation>
    <scope>NUCLEOTIDE SEQUENCE [LARGE SCALE GENOMIC DNA]</scope>
    <source>
        <strain>Okayama-7 / 130 / ATCC MYA-4618 / FGSC 9003</strain>
    </source>
</reference>
<organism>
    <name type="scientific">Coprinopsis cinerea (strain Okayama-7 / 130 / ATCC MYA-4618 / FGSC 9003)</name>
    <name type="common">Inky cap fungus</name>
    <name type="synonym">Hormographiella aspergillata</name>
    <dbReference type="NCBI Taxonomy" id="240176"/>
    <lineage>
        <taxon>Eukaryota</taxon>
        <taxon>Fungi</taxon>
        <taxon>Dikarya</taxon>
        <taxon>Basidiomycota</taxon>
        <taxon>Agaricomycotina</taxon>
        <taxon>Agaricomycetes</taxon>
        <taxon>Agaricomycetidae</taxon>
        <taxon>Agaricales</taxon>
        <taxon>Agaricineae</taxon>
        <taxon>Psathyrellaceae</taxon>
        <taxon>Coprinopsis</taxon>
    </lineage>
</organism>
<dbReference type="EC" id="3.1.-.-" evidence="1"/>
<dbReference type="EMBL" id="AACS02000008">
    <property type="protein sequence ID" value="EAU86309.2"/>
    <property type="status" value="ALT_INIT"/>
    <property type="molecule type" value="Genomic_DNA"/>
</dbReference>
<dbReference type="RefSeq" id="XP_001835524.2">
    <property type="nucleotide sequence ID" value="XM_001835472.2"/>
</dbReference>
<dbReference type="SMR" id="A8NQC2"/>
<dbReference type="FunCoup" id="A8NQC2">
    <property type="interactions" value="768"/>
</dbReference>
<dbReference type="STRING" id="240176.A8NQC2"/>
<dbReference type="GeneID" id="6012056"/>
<dbReference type="KEGG" id="cci:CC1G_08033"/>
<dbReference type="eggNOG" id="KOG2519">
    <property type="taxonomic scope" value="Eukaryota"/>
</dbReference>
<dbReference type="HOGENOM" id="CLU_032444_1_1_1"/>
<dbReference type="InParanoid" id="A8NQC2"/>
<dbReference type="OrthoDB" id="1937206at2759"/>
<dbReference type="Proteomes" id="UP000001861">
    <property type="component" value="Unassembled WGS sequence"/>
</dbReference>
<dbReference type="GO" id="GO:0005739">
    <property type="term" value="C:mitochondrion"/>
    <property type="evidence" value="ECO:0007669"/>
    <property type="project" value="UniProtKB-SubCell"/>
</dbReference>
<dbReference type="GO" id="GO:0005730">
    <property type="term" value="C:nucleolus"/>
    <property type="evidence" value="ECO:0007669"/>
    <property type="project" value="UniProtKB-SubCell"/>
</dbReference>
<dbReference type="GO" id="GO:0005654">
    <property type="term" value="C:nucleoplasm"/>
    <property type="evidence" value="ECO:0007669"/>
    <property type="project" value="UniProtKB-SubCell"/>
</dbReference>
<dbReference type="GO" id="GO:0008409">
    <property type="term" value="F:5'-3' exonuclease activity"/>
    <property type="evidence" value="ECO:0007669"/>
    <property type="project" value="UniProtKB-UniRule"/>
</dbReference>
<dbReference type="GO" id="GO:0017108">
    <property type="term" value="F:5'-flap endonuclease activity"/>
    <property type="evidence" value="ECO:0007669"/>
    <property type="project" value="UniProtKB-UniRule"/>
</dbReference>
<dbReference type="GO" id="GO:0003677">
    <property type="term" value="F:DNA binding"/>
    <property type="evidence" value="ECO:0007669"/>
    <property type="project" value="UniProtKB-UniRule"/>
</dbReference>
<dbReference type="GO" id="GO:0000287">
    <property type="term" value="F:magnesium ion binding"/>
    <property type="evidence" value="ECO:0007669"/>
    <property type="project" value="UniProtKB-UniRule"/>
</dbReference>
<dbReference type="GO" id="GO:0006284">
    <property type="term" value="P:base-excision repair"/>
    <property type="evidence" value="ECO:0007669"/>
    <property type="project" value="UniProtKB-UniRule"/>
</dbReference>
<dbReference type="GO" id="GO:0043137">
    <property type="term" value="P:DNA replication, removal of RNA primer"/>
    <property type="evidence" value="ECO:0007669"/>
    <property type="project" value="UniProtKB-UniRule"/>
</dbReference>
<dbReference type="CDD" id="cd09867">
    <property type="entry name" value="PIN_FEN1"/>
    <property type="match status" value="1"/>
</dbReference>
<dbReference type="FunFam" id="3.40.50.1010:FF:000003">
    <property type="entry name" value="Flap endonuclease 1"/>
    <property type="match status" value="1"/>
</dbReference>
<dbReference type="Gene3D" id="1.10.150.20">
    <property type="entry name" value="5' to 3' exonuclease, C-terminal subdomain"/>
    <property type="match status" value="1"/>
</dbReference>
<dbReference type="Gene3D" id="3.40.50.1010">
    <property type="entry name" value="5'-nuclease"/>
    <property type="match status" value="1"/>
</dbReference>
<dbReference type="HAMAP" id="MF_00614">
    <property type="entry name" value="Fen"/>
    <property type="match status" value="1"/>
</dbReference>
<dbReference type="InterPro" id="IPR036279">
    <property type="entry name" value="5-3_exonuclease_C_sf"/>
</dbReference>
<dbReference type="InterPro" id="IPR023426">
    <property type="entry name" value="Flap_endonuc"/>
</dbReference>
<dbReference type="InterPro" id="IPR008918">
    <property type="entry name" value="HhH2"/>
</dbReference>
<dbReference type="InterPro" id="IPR029060">
    <property type="entry name" value="PIN-like_dom_sf"/>
</dbReference>
<dbReference type="InterPro" id="IPR006086">
    <property type="entry name" value="XPG-I_dom"/>
</dbReference>
<dbReference type="InterPro" id="IPR006084">
    <property type="entry name" value="XPG/Rad2"/>
</dbReference>
<dbReference type="InterPro" id="IPR019974">
    <property type="entry name" value="XPG_CS"/>
</dbReference>
<dbReference type="InterPro" id="IPR006085">
    <property type="entry name" value="XPG_DNA_repair_N"/>
</dbReference>
<dbReference type="PANTHER" id="PTHR11081:SF9">
    <property type="entry name" value="FLAP ENDONUCLEASE 1"/>
    <property type="match status" value="1"/>
</dbReference>
<dbReference type="PANTHER" id="PTHR11081">
    <property type="entry name" value="FLAP ENDONUCLEASE FAMILY MEMBER"/>
    <property type="match status" value="1"/>
</dbReference>
<dbReference type="Pfam" id="PF00867">
    <property type="entry name" value="XPG_I"/>
    <property type="match status" value="1"/>
</dbReference>
<dbReference type="Pfam" id="PF00752">
    <property type="entry name" value="XPG_N"/>
    <property type="match status" value="1"/>
</dbReference>
<dbReference type="PRINTS" id="PR00853">
    <property type="entry name" value="XPGRADSUPER"/>
</dbReference>
<dbReference type="SMART" id="SM00279">
    <property type="entry name" value="HhH2"/>
    <property type="match status" value="1"/>
</dbReference>
<dbReference type="SMART" id="SM00484">
    <property type="entry name" value="XPGI"/>
    <property type="match status" value="1"/>
</dbReference>
<dbReference type="SMART" id="SM00485">
    <property type="entry name" value="XPGN"/>
    <property type="match status" value="1"/>
</dbReference>
<dbReference type="SUPFAM" id="SSF47807">
    <property type="entry name" value="5' to 3' exonuclease, C-terminal subdomain"/>
    <property type="match status" value="1"/>
</dbReference>
<dbReference type="SUPFAM" id="SSF88723">
    <property type="entry name" value="PIN domain-like"/>
    <property type="match status" value="1"/>
</dbReference>
<dbReference type="PROSITE" id="PS00841">
    <property type="entry name" value="XPG_1"/>
    <property type="match status" value="1"/>
</dbReference>
<dbReference type="PROSITE" id="PS00842">
    <property type="entry name" value="XPG_2"/>
    <property type="match status" value="1"/>
</dbReference>
<protein>
    <recommendedName>
        <fullName evidence="1">Flap endonuclease 1</fullName>
        <shortName evidence="1">FEN-1</shortName>
        <ecNumber evidence="1">3.1.-.-</ecNumber>
    </recommendedName>
    <alternativeName>
        <fullName evidence="1">Flap structure-specific endonuclease 1</fullName>
    </alternativeName>
</protein>
<comment type="function">
    <text evidence="1">Structure-specific nuclease with 5'-flap endonuclease and 5'-3' exonuclease activities involved in DNA replication and repair. During DNA replication, cleaves the 5'-overhanging flap structure that is generated by displacement synthesis when DNA polymerase encounters the 5'-end of a downstream Okazaki fragment. It enters the flap from the 5'-end and then tracks to cleave the flap base, leaving a nick for ligation. Also involved in the long patch base excision repair (LP-BER) pathway, by cleaving within the apurinic/apyrimidinic (AP) site-terminated flap. Acts as a genome stabilization factor that prevents flaps from equilibrating into structures that lead to duplications and deletions. Also possesses 5'-3' exonuclease activity on nicked or gapped double-stranded DNA, and exhibits RNase H activity. Also involved in replication and repair of rDNA and in repairing mitochondrial DNA.</text>
</comment>
<comment type="cofactor">
    <cofactor evidence="1">
        <name>Mg(2+)</name>
        <dbReference type="ChEBI" id="CHEBI:18420"/>
    </cofactor>
    <text evidence="1">Binds 2 magnesium ions per subunit. They probably participate in the reaction catalyzed by the enzyme. May bind an additional third magnesium ion after substrate binding.</text>
</comment>
<comment type="subunit">
    <text evidence="1">Interacts with PCNA. Three molecules of FEN1 bind to one PCNA trimer with each molecule binding to one PCNA monomer. PCNA stimulates the nuclease activity without altering cleavage specificity.</text>
</comment>
<comment type="subcellular location">
    <subcellularLocation>
        <location evidence="1">Nucleus</location>
        <location evidence="1">Nucleolus</location>
    </subcellularLocation>
    <subcellularLocation>
        <location evidence="1">Nucleus</location>
        <location evidence="1">Nucleoplasm</location>
    </subcellularLocation>
    <subcellularLocation>
        <location evidence="1">Mitochondrion</location>
    </subcellularLocation>
    <text evidence="1">Resides mostly in the nucleoli and relocalizes to the nucleoplasm upon DNA damage.</text>
</comment>
<comment type="PTM">
    <text evidence="1">Phosphorylated. Phosphorylation upon DNA damage induces relocalization to the nuclear plasma.</text>
</comment>
<comment type="similarity">
    <text evidence="1">Belongs to the XPG/RAD2 endonuclease family. FEN1 subfamily.</text>
</comment>
<comment type="sequence caution" evidence="3">
    <conflict type="erroneous initiation">
        <sequence resource="EMBL-CDS" id="EAU86309"/>
    </conflict>
    <text>Truncated N-terminus.</text>
</comment>
<proteinExistence type="inferred from homology"/>
<gene>
    <name evidence="1" type="primary">FEN1</name>
    <name type="ORF">CC1G_08033</name>
</gene>
<sequence length="458" mass="50783">MGIKGLTGLLNEHAPNSIKEHDIKTLFGRKVAIDASMSIYQFLIAVRQRDGEMLTNDAGETTSHLMGFFYRTIRIVENGIKPAYVFDGKPPELKKGVLSKRFEKREEAKEEGEEAKEIGTAEDVDRFSRRTVKVTKQHNEECQKLLRLMGVPCVIAPSEAEAQCAELARGGKVYAAGSEDMDTLTFNAPILFRHLTFSEAKKQPISEINLEAALKGLDMDMSQFVDLCILLGCDYLEPIKGVGPKSALKLIREFGGLKEVVEHLREKAAARKAEAEEEDEEEAEEPAPTSDVEMPDDEDGEKDSDDEEEAERRKKAEAAKKKKAQEKAKSAKKGKGKGKGGIQIPDEWPWEEAKQIFLKPDVIPADQVELEWKNPDVEGLVQFLVTEKGFSEERVRKGAEKLTKFLNAKQQGRLDGFFTVKPKQAPPPAAKGKGAASKGTKRKGEDKAEGSGKKAKKK</sequence>
<accession>A8NQC2</accession>
<name>FEN1_COPC7</name>
<feature type="chain" id="PRO_0000403573" description="Flap endonuclease 1">
    <location>
        <begin position="1"/>
        <end position="458"/>
    </location>
</feature>
<feature type="region of interest" description="N-domain">
    <location>
        <begin position="1"/>
        <end position="105"/>
    </location>
</feature>
<feature type="region of interest" description="I-domain">
    <location>
        <begin position="123"/>
        <end position="254"/>
    </location>
</feature>
<feature type="region of interest" description="Disordered" evidence="2">
    <location>
        <begin position="268"/>
        <end position="347"/>
    </location>
</feature>
<feature type="region of interest" description="Interaction with PCNA" evidence="1">
    <location>
        <begin position="410"/>
        <end position="418"/>
    </location>
</feature>
<feature type="region of interest" description="Disordered" evidence="2">
    <location>
        <begin position="416"/>
        <end position="458"/>
    </location>
</feature>
<feature type="compositionally biased region" description="Acidic residues" evidence="2">
    <location>
        <begin position="275"/>
        <end position="285"/>
    </location>
</feature>
<feature type="compositionally biased region" description="Acidic residues" evidence="2">
    <location>
        <begin position="293"/>
        <end position="309"/>
    </location>
</feature>
<feature type="compositionally biased region" description="Basic and acidic residues" evidence="2">
    <location>
        <begin position="310"/>
        <end position="329"/>
    </location>
</feature>
<feature type="compositionally biased region" description="Basic and acidic residues" evidence="2">
    <location>
        <begin position="442"/>
        <end position="452"/>
    </location>
</feature>
<feature type="binding site" evidence="1">
    <location>
        <position position="34"/>
    </location>
    <ligand>
        <name>Mg(2+)</name>
        <dbReference type="ChEBI" id="CHEBI:18420"/>
        <label>1</label>
    </ligand>
</feature>
<feature type="binding site" evidence="1">
    <location>
        <position position="47"/>
    </location>
    <ligand>
        <name>DNA</name>
        <dbReference type="ChEBI" id="CHEBI:16991"/>
    </ligand>
</feature>
<feature type="binding site" evidence="1">
    <location>
        <position position="71"/>
    </location>
    <ligand>
        <name>DNA</name>
        <dbReference type="ChEBI" id="CHEBI:16991"/>
    </ligand>
</feature>
<feature type="binding site" evidence="1">
    <location>
        <position position="87"/>
    </location>
    <ligand>
        <name>Mg(2+)</name>
        <dbReference type="ChEBI" id="CHEBI:18420"/>
        <label>1</label>
    </ligand>
</feature>
<feature type="binding site" evidence="1">
    <location>
        <position position="159"/>
    </location>
    <ligand>
        <name>DNA</name>
        <dbReference type="ChEBI" id="CHEBI:16991"/>
    </ligand>
</feature>
<feature type="binding site" evidence="1">
    <location>
        <position position="159"/>
    </location>
    <ligand>
        <name>Mg(2+)</name>
        <dbReference type="ChEBI" id="CHEBI:18420"/>
        <label>1</label>
    </ligand>
</feature>
<feature type="binding site" evidence="1">
    <location>
        <position position="161"/>
    </location>
    <ligand>
        <name>Mg(2+)</name>
        <dbReference type="ChEBI" id="CHEBI:18420"/>
        <label>1</label>
    </ligand>
</feature>
<feature type="binding site" evidence="1">
    <location>
        <position position="180"/>
    </location>
    <ligand>
        <name>Mg(2+)</name>
        <dbReference type="ChEBI" id="CHEBI:18420"/>
        <label>2</label>
    </ligand>
</feature>
<feature type="binding site" evidence="1">
    <location>
        <position position="182"/>
    </location>
    <ligand>
        <name>Mg(2+)</name>
        <dbReference type="ChEBI" id="CHEBI:18420"/>
        <label>2</label>
    </ligand>
</feature>
<feature type="binding site" evidence="1">
    <location>
        <position position="232"/>
    </location>
    <ligand>
        <name>DNA</name>
        <dbReference type="ChEBI" id="CHEBI:16991"/>
    </ligand>
</feature>
<feature type="binding site" evidence="1">
    <location>
        <position position="234"/>
    </location>
    <ligand>
        <name>DNA</name>
        <dbReference type="ChEBI" id="CHEBI:16991"/>
    </ligand>
</feature>
<feature type="binding site" evidence="1">
    <location>
        <position position="234"/>
    </location>
    <ligand>
        <name>Mg(2+)</name>
        <dbReference type="ChEBI" id="CHEBI:18420"/>
        <label>2</label>
    </ligand>
</feature>